<protein>
    <recommendedName>
        <fullName>Cholera enterotoxin subunit A</fullName>
    </recommendedName>
    <alternativeName>
        <fullName>Cholera enterotoxin, A chain</fullName>
    </alternativeName>
    <component>
        <recommendedName>
            <fullName>Cholera enterotoxin subunit A1</fullName>
            <ecNumber>2.4.2.-</ecNumber>
        </recommendedName>
        <alternativeName>
            <fullName>Cholera enterotoxin A1 chain</fullName>
        </alternativeName>
        <alternativeName>
            <fullName>Cholera enterotoxin alpha chain</fullName>
        </alternativeName>
        <alternativeName>
            <fullName>NAD(+)--diphthamide ADP-ribosyltransferase</fullName>
        </alternativeName>
    </component>
    <component>
        <recommendedName>
            <fullName>Cholera enterotoxin subunit A2</fullName>
        </recommendedName>
        <alternativeName>
            <fullName>Cholera enterotoxin A2 chain</fullName>
        </alternativeName>
        <alternativeName>
            <fullName>Cholera enterotoxin gamma chain</fullName>
        </alternativeName>
    </component>
</protein>
<dbReference type="EC" id="2.4.2.-"/>
<dbReference type="EMBL" id="X00171">
    <property type="protein sequence ID" value="CAA24995.1"/>
    <property type="molecule type" value="Genomic_DNA"/>
</dbReference>
<dbReference type="EMBL" id="X58785">
    <property type="protein sequence ID" value="CAA41590.1"/>
    <property type="molecule type" value="Genomic_DNA"/>
</dbReference>
<dbReference type="EMBL" id="D30053">
    <property type="protein sequence ID" value="BAA06290.1"/>
    <property type="molecule type" value="Genomic_DNA"/>
</dbReference>
<dbReference type="EMBL" id="X58786">
    <property type="protein sequence ID" value="CAA41592.1"/>
    <property type="molecule type" value="Genomic_DNA"/>
</dbReference>
<dbReference type="EMBL" id="K02679">
    <property type="protein sequence ID" value="AAA27514.1"/>
    <property type="molecule type" value="Genomic_DNA"/>
</dbReference>
<dbReference type="EMBL" id="AF175708">
    <property type="protein sequence ID" value="AAD51359.1"/>
    <property type="molecule type" value="Genomic_DNA"/>
</dbReference>
<dbReference type="EMBL" id="AE003852">
    <property type="protein sequence ID" value="AAF94614.1"/>
    <property type="molecule type" value="Genomic_DNA"/>
</dbReference>
<dbReference type="EMBL" id="K01170">
    <property type="protein sequence ID" value="AAA27572.1"/>
    <property type="molecule type" value="Genomic_DNA"/>
</dbReference>
<dbReference type="EMBL" id="D30052">
    <property type="protein sequence ID" value="BAA06288.1"/>
    <property type="molecule type" value="Genomic_DNA"/>
</dbReference>
<dbReference type="PIR" id="A05129">
    <property type="entry name" value="XVVCA"/>
</dbReference>
<dbReference type="RefSeq" id="NP_231100.1">
    <property type="nucleotide sequence ID" value="NC_002505.1"/>
</dbReference>
<dbReference type="RefSeq" id="WP_001881225.1">
    <property type="nucleotide sequence ID" value="NZ_LT906614.1"/>
</dbReference>
<dbReference type="PDB" id="1S5B">
    <property type="method" value="X-ray"/>
    <property type="resolution" value="2.13 A"/>
    <property type="chains" value="A=19-258"/>
</dbReference>
<dbReference type="PDB" id="1S5C">
    <property type="method" value="X-ray"/>
    <property type="resolution" value="2.50 A"/>
    <property type="chains" value="A=19-258"/>
</dbReference>
<dbReference type="PDB" id="1S5D">
    <property type="method" value="X-ray"/>
    <property type="resolution" value="1.75 A"/>
    <property type="chains" value="A=19-258"/>
</dbReference>
<dbReference type="PDB" id="1S5E">
    <property type="method" value="X-ray"/>
    <property type="resolution" value="1.90 A"/>
    <property type="chains" value="A/B=19-258"/>
</dbReference>
<dbReference type="PDB" id="1S5F">
    <property type="method" value="X-ray"/>
    <property type="resolution" value="2.60 A"/>
    <property type="chains" value="A=19-258"/>
</dbReference>
<dbReference type="PDB" id="1XTC">
    <property type="method" value="X-ray"/>
    <property type="resolution" value="2.40 A"/>
    <property type="chains" value="A=19-212, C=213-258"/>
</dbReference>
<dbReference type="PDB" id="2A5D">
    <property type="method" value="X-ray"/>
    <property type="resolution" value="1.80 A"/>
    <property type="chains" value="B=19-210"/>
</dbReference>
<dbReference type="PDB" id="2A5F">
    <property type="method" value="X-ray"/>
    <property type="resolution" value="2.02 A"/>
    <property type="chains" value="B=19-210"/>
</dbReference>
<dbReference type="PDB" id="2A5G">
    <property type="method" value="X-ray"/>
    <property type="resolution" value="2.66 A"/>
    <property type="chains" value="B=19-210"/>
</dbReference>
<dbReference type="PDB" id="8OXS">
    <property type="method" value="X-ray"/>
    <property type="resolution" value="1.60 A"/>
    <property type="chains" value="A/B=19-258"/>
</dbReference>
<dbReference type="PDB" id="8Q6I">
    <property type="method" value="X-ray"/>
    <property type="resolution" value="1.60 A"/>
    <property type="chains" value="A=19-258"/>
</dbReference>
<dbReference type="PDB" id="8QRE">
    <property type="method" value="X-ray"/>
    <property type="resolution" value="2.30 A"/>
    <property type="chains" value="A/B=19-258"/>
</dbReference>
<dbReference type="PDBsum" id="1S5B"/>
<dbReference type="PDBsum" id="1S5C"/>
<dbReference type="PDBsum" id="1S5D"/>
<dbReference type="PDBsum" id="1S5E"/>
<dbReference type="PDBsum" id="1S5F"/>
<dbReference type="PDBsum" id="1XTC"/>
<dbReference type="PDBsum" id="2A5D"/>
<dbReference type="PDBsum" id="2A5F"/>
<dbReference type="PDBsum" id="2A5G"/>
<dbReference type="PDBsum" id="8OXS"/>
<dbReference type="PDBsum" id="8Q6I"/>
<dbReference type="PDBsum" id="8QRE"/>
<dbReference type="BMRB" id="P01555"/>
<dbReference type="SMR" id="P01555"/>
<dbReference type="ComplexPortal" id="CPX-2345">
    <property type="entry name" value="Cholera toxin"/>
</dbReference>
<dbReference type="DIP" id="DIP-6255N"/>
<dbReference type="ELM" id="P01555"/>
<dbReference type="IntAct" id="P01555">
    <property type="interactions" value="2"/>
</dbReference>
<dbReference type="STRING" id="243277.VC_1457"/>
<dbReference type="DNASU" id="2613963"/>
<dbReference type="EnsemblBacteria" id="AAF94614">
    <property type="protein sequence ID" value="AAF94614"/>
    <property type="gene ID" value="VC_1457"/>
</dbReference>
<dbReference type="KEGG" id="vch:VC_1457"/>
<dbReference type="PATRIC" id="fig|243277.26.peg.1387"/>
<dbReference type="eggNOG" id="ENOG5033C2P">
    <property type="taxonomic scope" value="Bacteria"/>
</dbReference>
<dbReference type="HOGENOM" id="CLU_091751_0_0_6"/>
<dbReference type="BioCyc" id="MetaCyc:FY484_RS07330-MONOMER"/>
<dbReference type="EvolutionaryTrace" id="P01555"/>
<dbReference type="PHI-base" id="PHI:698"/>
<dbReference type="PRO" id="PR:P01555"/>
<dbReference type="Proteomes" id="UP000000584">
    <property type="component" value="Chromosome 1"/>
</dbReference>
<dbReference type="GO" id="GO:1902494">
    <property type="term" value="C:catalytic complex"/>
    <property type="evidence" value="ECO:0000315"/>
    <property type="project" value="CAFA"/>
</dbReference>
<dbReference type="GO" id="GO:0005615">
    <property type="term" value="C:extracellular space"/>
    <property type="evidence" value="ECO:0007669"/>
    <property type="project" value="InterPro"/>
</dbReference>
<dbReference type="GO" id="GO:0042597">
    <property type="term" value="C:periplasmic space"/>
    <property type="evidence" value="ECO:0000315"/>
    <property type="project" value="CAFA"/>
</dbReference>
<dbReference type="GO" id="GO:0005534">
    <property type="term" value="F:galactose binding"/>
    <property type="evidence" value="ECO:0000315"/>
    <property type="project" value="CAFA"/>
</dbReference>
<dbReference type="GO" id="GO:0016757">
    <property type="term" value="F:glycosyltransferase activity"/>
    <property type="evidence" value="ECO:0007669"/>
    <property type="project" value="UniProtKB-KW"/>
</dbReference>
<dbReference type="GO" id="GO:0008289">
    <property type="term" value="F:lipid binding"/>
    <property type="evidence" value="ECO:0000314"/>
    <property type="project" value="DisProt"/>
</dbReference>
<dbReference type="GO" id="GO:0016779">
    <property type="term" value="F:nucleotidyltransferase activity"/>
    <property type="evidence" value="ECO:0007669"/>
    <property type="project" value="UniProtKB-KW"/>
</dbReference>
<dbReference type="GO" id="GO:0090729">
    <property type="term" value="F:toxin activity"/>
    <property type="evidence" value="ECO:0007669"/>
    <property type="project" value="UniProtKB-KW"/>
</dbReference>
<dbReference type="GO" id="GO:0042531">
    <property type="term" value="P:positive regulation of tyrosine phosphorylation of STAT protein"/>
    <property type="evidence" value="ECO:0000314"/>
    <property type="project" value="CACAO"/>
</dbReference>
<dbReference type="GO" id="GO:0141104">
    <property type="term" value="P:symbiont-mediated activation of host G protein-coupled receptor signal transduction"/>
    <property type="evidence" value="ECO:0000269"/>
    <property type="project" value="SigSci"/>
</dbReference>
<dbReference type="DisProt" id="DP00250"/>
<dbReference type="Gene3D" id="1.20.5.240">
    <property type="match status" value="1"/>
</dbReference>
<dbReference type="Gene3D" id="3.90.210.10">
    <property type="entry name" value="Heat-Labile Enterotoxin, subunit A"/>
    <property type="match status" value="1"/>
</dbReference>
<dbReference type="InterPro" id="IPR001144">
    <property type="entry name" value="Enterotoxin_A"/>
</dbReference>
<dbReference type="Pfam" id="PF01375">
    <property type="entry name" value="Enterotoxin_a"/>
    <property type="match status" value="1"/>
</dbReference>
<dbReference type="PRINTS" id="PR00771">
    <property type="entry name" value="ENTEROTOXINA"/>
</dbReference>
<dbReference type="SUPFAM" id="SSF56399">
    <property type="entry name" value="ADP-ribosylation"/>
    <property type="match status" value="1"/>
</dbReference>
<reference key="1">
    <citation type="journal article" date="1983" name="Nature">
        <title>Cholera toxin genes: nucleotide sequence, deletion analysis and vaccine development.</title>
        <authorList>
            <person name="Mekalanos J.J."/>
            <person name="Swartz D.J."/>
            <person name="Pearson G.D.N."/>
            <person name="Harford N."/>
            <person name="Groyne F."/>
            <person name="de Wilde M."/>
        </authorList>
    </citation>
    <scope>NUCLEOTIDE SEQUENCE [GENOMIC DNA]</scope>
    <source>
        <strain>ATCC 39050 / El Tor Inaba 2125 / Serotype O1</strain>
    </source>
</reference>
<reference key="2">
    <citation type="journal article" date="1991" name="Biochim. Biophys. Acta">
        <title>Nucleotide sequence analysis of the CT operon of the Vibrio cholerae classical strain 569B.</title>
        <authorList>
            <person name="Dams E."/>
            <person name="de Wolf M."/>
            <person name="Dierick W."/>
        </authorList>
    </citation>
    <scope>NUCLEOTIDE SEQUENCE [GENOMIC DNA]</scope>
    <source>
        <strain>ATCC 25870 / Classical Inaba 569B / Serotype O1</strain>
    </source>
</reference>
<reference key="3">
    <citation type="submission" date="1994-05" db="EMBL/GenBank/DDBJ databases">
        <authorList>
            <person name="Yamamoto K."/>
            <person name="Do V.G.R.F."/>
            <person name="Xu M."/>
            <person name="Iida T."/>
            <person name="Miwatani T."/>
            <person name="Albert M.J."/>
            <person name="Honda T."/>
        </authorList>
    </citation>
    <scope>NUCLEOTIDE SEQUENCE [GENOMIC DNA]</scope>
    <source>
        <strain>1854 / O139-Bengal</strain>
    </source>
</reference>
<reference key="4">
    <citation type="submission" date="1991-05" db="EMBL/GenBank/DDBJ databases">
        <authorList>
            <person name="Dams E."/>
            <person name="de Wolf M."/>
            <person name="Dierick W."/>
        </authorList>
    </citation>
    <scope>NUCLEOTIDE SEQUENCE [GENOMIC DNA]</scope>
    <source>
        <strain>ATCC 39050 / El Tor Inaba 2125 / Serotype O1</strain>
    </source>
</reference>
<reference key="5">
    <citation type="journal article" date="1999" name="Misainmurhag Hoiji">
        <title>Cloning and nucleotide sequence analysis of the virulence gene cassette from Vibrio cholerae KNIH002 isolated in Korea.</title>
        <authorList>
            <person name="Shin H.J."/>
            <person name="Park Y.C."/>
            <person name="Kim Y.C."/>
        </authorList>
    </citation>
    <scope>NUCLEOTIDE SEQUENCE [GENOMIC DNA]</scope>
    <source>
        <strain>KNIH002</strain>
    </source>
</reference>
<reference key="6">
    <citation type="journal article" date="2000" name="Nature">
        <title>DNA sequence of both chromosomes of the cholera pathogen Vibrio cholerae.</title>
        <authorList>
            <person name="Heidelberg J.F."/>
            <person name="Eisen J.A."/>
            <person name="Nelson W.C."/>
            <person name="Clayton R.A."/>
            <person name="Gwinn M.L."/>
            <person name="Dodson R.J."/>
            <person name="Haft D.H."/>
            <person name="Hickey E.K."/>
            <person name="Peterson J.D."/>
            <person name="Umayam L.A."/>
            <person name="Gill S.R."/>
            <person name="Nelson K.E."/>
            <person name="Read T.D."/>
            <person name="Tettelin H."/>
            <person name="Richardson D.L."/>
            <person name="Ermolaeva M.D."/>
            <person name="Vamathevan J.J."/>
            <person name="Bass S."/>
            <person name="Qin H."/>
            <person name="Dragoi I."/>
            <person name="Sellers P."/>
            <person name="McDonald L.A."/>
            <person name="Utterback T.R."/>
            <person name="Fleischmann R.D."/>
            <person name="Nierman W.C."/>
            <person name="White O."/>
            <person name="Salzberg S.L."/>
            <person name="Smith H.O."/>
            <person name="Colwell R.R."/>
            <person name="Mekalanos J.J."/>
            <person name="Venter J.C."/>
            <person name="Fraser C.M."/>
        </authorList>
    </citation>
    <scope>NUCLEOTIDE SEQUENCE [LARGE SCALE GENOMIC DNA]</scope>
    <source>
        <strain>ATCC 39315 / El Tor Inaba N16961</strain>
    </source>
</reference>
<reference key="7">
    <citation type="journal article" date="1984" name="J. Bacteriol.">
        <title>Vibrio cholerae enterotoxin genes: nucleotide sequence analysis of DNA encoding ADP-ribosyltransferase.</title>
        <authorList>
            <person name="Lockman H.A."/>
            <person name="Galen J.E."/>
            <person name="Kaper J.B."/>
        </authorList>
    </citation>
    <scope>NUCLEOTIDE SEQUENCE [GENOMIC DNA] OF 1-212</scope>
    <source>
        <strain>ATCC 25870 / Classical Inaba 569B / Serotype O1</strain>
    </source>
</reference>
<reference key="8">
    <citation type="journal article" date="1983" name="J. Biol. Chem.">
        <title>Nucleotide sequence analysis of the A2 and B subunits of Vibrio cholerae enterotoxin.</title>
        <authorList>
            <person name="Lockman H."/>
            <person name="Kaper J.B."/>
        </authorList>
    </citation>
    <scope>NUCLEOTIDE SEQUENCE [GENOMIC DNA] OF 213-258</scope>
</reference>
<reference key="9">
    <citation type="journal article" date="1981" name="FEBS Lett.">
        <title>Isolation and characterization of a precursor form of the 'A' subunit of cholera toxin.</title>
        <authorList>
            <person name="Duffy L.K."/>
            <person name="Peterson J.W."/>
            <person name="Kurosky A."/>
        </authorList>
    </citation>
    <scope>PROTEIN SEQUENCE OF 19-27</scope>
</reference>
<reference key="10">
    <citation type="journal article" date="1976" name="Immunochemistry">
        <title>Subunit structure and N-terminal amino acid sequence of the three chains of cholera enterotoxin.</title>
        <authorList>
            <person name="Klapper D.G."/>
            <person name="Finkelstein R.A."/>
            <person name="Capra J.D."/>
        </authorList>
    </citation>
    <scope>PROTEIN SEQUENCE OF 19-38 AND 213-232</scope>
</reference>
<reference key="11">
    <citation type="journal article" date="1979" name="FEBS Lett.">
        <title>Primary structure of cholera toxin subunit A1: isolation, partial sequences and alignment of the BrCN fragments.</title>
        <authorList>
            <person name="Lai C.-Y."/>
            <person name="Cancedda F."/>
            <person name="Chang D."/>
        </authorList>
    </citation>
    <scope>PROTEIN SEQUENCE OF 27-72 AND 111-139</scope>
</reference>
<reference key="12">
    <citation type="journal article" date="1981" name="J. Biol. Chem.">
        <title>Covalent structure of the gamma chain of the A subunit of cholera toxin.</title>
        <authorList>
            <person name="Duffy L.K."/>
            <person name="Peterson J.W."/>
            <person name="Kurosky A."/>
        </authorList>
    </citation>
    <scope>PROTEIN SEQUENCE OF 213-258</scope>
</reference>
<reference key="13">
    <citation type="journal article" date="1971" name="Nature">
        <title>Stimulation of intestinal adenyl cyclase by cholera toxin.</title>
        <authorList>
            <person name="Sharp G.W."/>
            <person name="Hynie S."/>
        </authorList>
    </citation>
    <scope>INTERACTION BETWEEN CHOLERA TOXIN AND ADENYLATE CYCLASE</scope>
</reference>
<reference key="14">
    <citation type="journal article" date="1976" name="Biochemistry">
        <title>The arrangement of subunits in cholera toxin.</title>
        <authorList>
            <person name="Gill D.M."/>
        </authorList>
    </citation>
    <scope>SUBUNIT</scope>
</reference>
<reference key="15">
    <citation type="journal article" date="2003" name="Mol. Biol. Cell">
        <title>Gangliosides that associate with lipid rafts mediate transport of cholera and related toxins from the plasma membrane to endoplasmic reticulum.</title>
        <authorList>
            <person name="Fujinaga Y."/>
            <person name="Wolf A.A."/>
            <person name="Rodighiero C."/>
            <person name="Wheeler H."/>
            <person name="Tsai B."/>
            <person name="Allen L."/>
            <person name="Jobling M.G."/>
            <person name="Rapoport T."/>
            <person name="Holmes R.K."/>
            <person name="Lencer W.I."/>
        </authorList>
    </citation>
    <scope>TRANSPORT OF CHOLERA TOXIN WITHIN THE INTESTINAL CELL</scope>
</reference>
<reference key="16">
    <citation type="journal article" date="1995" name="J. Mol. Biol.">
        <title>The three-dimensional crystal structure of cholera toxin.</title>
        <authorList>
            <person name="Zhang R.-G."/>
            <person name="Scott D.L."/>
            <person name="Westbrook M.L."/>
            <person name="Nance S."/>
            <person name="Spangler B.D."/>
            <person name="Shipley G.G."/>
            <person name="Westbrook E.M."/>
        </authorList>
    </citation>
    <scope>X-RAY CRYSTALLOGRAPHY (2.4 ANGSTROMS)</scope>
</reference>
<reference key="17">
    <citation type="journal article" date="2005" name="Science">
        <title>Structural basis for the activation of cholera toxin by human ARF6-GTP.</title>
        <authorList>
            <person name="O'Neal C.J."/>
            <person name="Jobling M.G."/>
            <person name="Holmes R.K."/>
            <person name="Hol W.G."/>
        </authorList>
    </citation>
    <scope>X-RAY CRYSTALLOGRAPHY (1.8 ANGSTROMS) OF 19-210 IN COMPLEX WITH NAD AND HUMAN ARF6</scope>
    <scope>SUBUNIT</scope>
</reference>
<accession>P01555</accession>
<accession>Q56634</accession>
<accession>Q9JPV1</accession>
<evidence type="ECO:0000250" key="1"/>
<evidence type="ECO:0000269" key="2">
    <source>
    </source>
</evidence>
<evidence type="ECO:0000269" key="3">
    <source>
    </source>
</evidence>
<evidence type="ECO:0000269" key="4">
    <source>
    </source>
</evidence>
<evidence type="ECO:0000269" key="5">
    <source>
    </source>
</evidence>
<evidence type="ECO:0000305" key="6"/>
<evidence type="ECO:0007829" key="7">
    <source>
        <dbReference type="PDB" id="1S5B"/>
    </source>
</evidence>
<evidence type="ECO:0007829" key="8">
    <source>
        <dbReference type="PDB" id="1S5D"/>
    </source>
</evidence>
<evidence type="ECO:0007829" key="9">
    <source>
        <dbReference type="PDB" id="1XTC"/>
    </source>
</evidence>
<evidence type="ECO:0007829" key="10">
    <source>
        <dbReference type="PDB" id="2A5D"/>
    </source>
</evidence>
<keyword id="KW-0002">3D-structure</keyword>
<keyword id="KW-0903">Direct protein sequencing</keyword>
<keyword id="KW-1015">Disulfide bond</keyword>
<keyword id="KW-0260">Enterotoxin</keyword>
<keyword id="KW-0328">Glycosyltransferase</keyword>
<keyword id="KW-0520">NAD</keyword>
<keyword id="KW-0548">Nucleotidyltransferase</keyword>
<keyword id="KW-1185">Reference proteome</keyword>
<keyword id="KW-0732">Signal</keyword>
<keyword id="KW-0800">Toxin</keyword>
<keyword id="KW-0808">Transferase</keyword>
<keyword id="KW-0843">Virulence</keyword>
<sequence length="258" mass="29336">MVKIIFVFFIFLSSFSYANDDKLYRADSRPPDEIKQSGGLMPRGQSEYFDRGTQMNINLYDHARGTQTGFVRHDDGYVSTSISLRSAHLVGQTILSGHSTYYIYVIATAPNMFNVNDVLGAYSPHPDEQEVSALGGIPYSQIYGWYRVHFGVLDEQLHRNRGYRDRYYSNLDIAPAADGYGLAGFPPEHRAWREEPWIHHAPPGCGNAPRSSMSNTCDEKTQSLGVKFLDEYQSKVKRQIFSGYQSDIDTHNRIKDEL</sequence>
<organism>
    <name type="scientific">Vibrio cholerae serotype O1 (strain ATCC 39315 / El Tor Inaba N16961)</name>
    <dbReference type="NCBI Taxonomy" id="243277"/>
    <lineage>
        <taxon>Bacteria</taxon>
        <taxon>Pseudomonadati</taxon>
        <taxon>Pseudomonadota</taxon>
        <taxon>Gammaproteobacteria</taxon>
        <taxon>Vibrionales</taxon>
        <taxon>Vibrionaceae</taxon>
        <taxon>Vibrio</taxon>
    </lineage>
</organism>
<name>CHTA_VIBCH</name>
<proteinExistence type="evidence at protein level"/>
<feature type="signal peptide" evidence="4 5">
    <location>
        <begin position="1"/>
        <end position="18"/>
    </location>
</feature>
<feature type="chain" id="PRO_0000019342" description="Cholera enterotoxin subunit A1">
    <location>
        <begin position="19"/>
        <end position="212"/>
    </location>
</feature>
<feature type="chain" id="PRO_0000019343" description="Cholera enterotoxin subunit A2">
    <location>
        <begin position="213"/>
        <end position="258"/>
    </location>
</feature>
<feature type="active site" evidence="1">
    <location>
        <position position="130"/>
    </location>
</feature>
<feature type="binding site" evidence="2">
    <location>
        <begin position="25"/>
        <end position="28"/>
    </location>
    <ligand>
        <name>NAD(+)</name>
        <dbReference type="ChEBI" id="CHEBI:57540"/>
    </ligand>
</feature>
<feature type="binding site" evidence="2">
    <location>
        <begin position="41"/>
        <end position="43"/>
    </location>
    <ligand>
        <name>NAD(+)</name>
        <dbReference type="ChEBI" id="CHEBI:57540"/>
    </ligand>
</feature>
<feature type="disulfide bond" description="Interchain (between A1 and A2 chains)">
    <location>
        <begin position="205"/>
        <end position="217"/>
    </location>
</feature>
<feature type="sequence conflict" description="In Ref. 9; AA sequence." evidence="6" ref="9">
    <original>D</original>
    <variation>N</variation>
    <location>
        <position position="20"/>
    </location>
</feature>
<feature type="sequence conflict" description="In Ref. 10; AA sequence." evidence="6" ref="10">
    <original>S</original>
    <variation>R</variation>
    <location>
        <position position="37"/>
    </location>
</feature>
<feature type="sequence conflict" description="In Ref. 11; AA sequence." evidence="6" ref="11">
    <original>G</original>
    <variation>L</variation>
    <location>
        <position position="39"/>
    </location>
</feature>
<feature type="sequence conflict" description="In Ref. 11; AA sequence." evidence="6" ref="11">
    <original>QS</original>
    <variation>SE</variation>
    <location>
        <begin position="45"/>
        <end position="46"/>
    </location>
</feature>
<feature type="sequence conflict" description="In Ref. 11; AA sequence." evidence="6" ref="11">
    <original>N</original>
    <variation>L</variation>
    <location>
        <position position="111"/>
    </location>
</feature>
<feature type="sequence conflict" description="In Ref. 11; AA sequence." evidence="6" ref="11">
    <original>S</original>
    <variation>A</variation>
    <location>
        <position position="132"/>
    </location>
</feature>
<feature type="sequence conflict" description="In Ref. 1; CAA24995." evidence="6" ref="1">
    <original>M</original>
    <variation>I</variation>
    <location>
        <position position="213"/>
    </location>
</feature>
<feature type="sequence conflict" description="In Ref. 12; AA sequence." evidence="6" ref="12">
    <original>DI</original>
    <variation>ID</variation>
    <location>
        <begin position="247"/>
        <end position="248"/>
    </location>
</feature>
<feature type="sequence conflict" description="In Ref. 12; AA sequence." evidence="6" ref="12">
    <original>D</original>
    <variation>N</variation>
    <location>
        <position position="256"/>
    </location>
</feature>
<feature type="strand" evidence="8">
    <location>
        <begin position="22"/>
        <end position="29"/>
    </location>
</feature>
<feature type="helix" evidence="8">
    <location>
        <begin position="31"/>
        <end position="37"/>
    </location>
</feature>
<feature type="helix" evidence="8">
    <location>
        <begin position="43"/>
        <end position="45"/>
    </location>
</feature>
<feature type="strand" evidence="9">
    <location>
        <begin position="51"/>
        <end position="53"/>
    </location>
</feature>
<feature type="helix" evidence="8">
    <location>
        <begin position="59"/>
        <end position="64"/>
    </location>
</feature>
<feature type="strand" evidence="8">
    <location>
        <begin position="70"/>
        <end position="72"/>
    </location>
</feature>
<feature type="strand" evidence="8">
    <location>
        <begin position="77"/>
        <end position="83"/>
    </location>
</feature>
<feature type="helix" evidence="8">
    <location>
        <begin position="84"/>
        <end position="94"/>
    </location>
</feature>
<feature type="turn" evidence="10">
    <location>
        <begin position="95"/>
        <end position="97"/>
    </location>
</feature>
<feature type="strand" evidence="8">
    <location>
        <begin position="99"/>
        <end position="107"/>
    </location>
</feature>
<feature type="strand" evidence="8">
    <location>
        <begin position="112"/>
        <end position="114"/>
    </location>
</feature>
<feature type="helix" evidence="8">
    <location>
        <begin position="115"/>
        <end position="119"/>
    </location>
</feature>
<feature type="helix" evidence="8">
    <location>
        <begin position="120"/>
        <end position="122"/>
    </location>
</feature>
<feature type="helix" evidence="8">
    <location>
        <begin position="126"/>
        <end position="128"/>
    </location>
</feature>
<feature type="strand" evidence="8">
    <location>
        <begin position="131"/>
        <end position="134"/>
    </location>
</feature>
<feature type="helix" evidence="8">
    <location>
        <begin position="139"/>
        <end position="141"/>
    </location>
</feature>
<feature type="strand" evidence="8">
    <location>
        <begin position="142"/>
        <end position="149"/>
    </location>
</feature>
<feature type="strand" evidence="7">
    <location>
        <begin position="152"/>
        <end position="154"/>
    </location>
</feature>
<feature type="strand" evidence="7">
    <location>
        <begin position="156"/>
        <end position="159"/>
    </location>
</feature>
<feature type="helix" evidence="8">
    <location>
        <begin position="165"/>
        <end position="169"/>
    </location>
</feature>
<feature type="helix" evidence="8">
    <location>
        <begin position="176"/>
        <end position="178"/>
    </location>
</feature>
<feature type="helix" evidence="8">
    <location>
        <begin position="180"/>
        <end position="182"/>
    </location>
</feature>
<feature type="helix" evidence="8">
    <location>
        <begin position="190"/>
        <end position="193"/>
    </location>
</feature>
<feature type="helix" evidence="8">
    <location>
        <begin position="197"/>
        <end position="200"/>
    </location>
</feature>
<feature type="helix" evidence="8">
    <location>
        <begin position="217"/>
        <end position="244"/>
    </location>
</feature>
<feature type="turn" evidence="8">
    <location>
        <begin position="245"/>
        <end position="247"/>
    </location>
</feature>
<feature type="turn" evidence="8">
    <location>
        <begin position="250"/>
        <end position="252"/>
    </location>
</feature>
<feature type="helix" evidence="9">
    <location>
        <begin position="254"/>
        <end position="257"/>
    </location>
</feature>
<gene>
    <name type="primary">ctxA</name>
    <name type="synonym">toxA</name>
    <name type="ordered locus">VC_1457</name>
</gene>
<comment type="function">
    <text>The A1 chain catalyzes the ADP-ribosylation of Gs alpha, a GTP-binding regulatory protein, to activate the adenylate cyclase. This leads to an overproduction of cAMP and eventually to a hypersecretion of chloride and bicarbonate followed by water, resulting in the characteristic cholera stool. The A2 chain tethers A1 to the pentameric ring.</text>
</comment>
<comment type="subunit">
    <text evidence="2 3">The holotoxin (choleragen) consists of a pentameric ring of B subunits whose central pore is occupied by the A subunit. The A subunit contains two chains, A1 and A2, linked by a disulfide bridge. Interaction with the host protein ARF6 causes a conformation change so that the enterotoxin subunit A1 can bind NAD and catalyze the ADP-ribosylation of the host Gs alpha.</text>
</comment>
<comment type="interaction">
    <interactant intactId="EBI-1038392">
        <id>P01555</id>
    </interactant>
    <interactant intactId="EBI-1038383">
        <id>P01556</id>
        <label>ctxB</label>
    </interactant>
    <organismsDiffer>false</organismsDiffer>
    <experiments>5</experiments>
</comment>
<comment type="domain">
    <text>The four C-terminal residues of the A2 chain occupy the central pore of the holotoxin. Deletion of these residues weakens the interaction between the A subunit and the B pentamer without impairing the pentamer formation.</text>
</comment>
<comment type="miscellaneous">
    <text>After binding to gangliosides GM1 in lipid rafts, through the subunit B pentamer, the holotoxin and the gangliosides are internalized. The holotoxin remains bound to GM1 until arrival in the ER. The A subunit has previously been cleaved in the intestinal lumen but the A1 and A2 chains have remained associated. In the ER, the A subunit disulfide bridge is reduced, the A1 chain is unfolded by the PDI and disassembled from the rest of the toxin. Then, the membrane-associated ER oxidase ERO1 oxidizes PDI, which releases the unfolded A1 chain. The next step is the retrotranslocation of A1 into the cytosol. This might be mediated by the protein-conducting pore SEC61. Upon arrival in the cytosol, A1 refolds and avoids proteasome degradation. In one way or another, A1 finally reaches its target and induces toxicity.</text>
</comment>
<comment type="similarity">
    <text evidence="6">Belongs to the enterotoxin A family.</text>
</comment>